<organism>
    <name type="scientific">Campylobacter jejuni (strain RM1221)</name>
    <dbReference type="NCBI Taxonomy" id="195099"/>
    <lineage>
        <taxon>Bacteria</taxon>
        <taxon>Pseudomonadati</taxon>
        <taxon>Campylobacterota</taxon>
        <taxon>Epsilonproteobacteria</taxon>
        <taxon>Campylobacterales</taxon>
        <taxon>Campylobacteraceae</taxon>
        <taxon>Campylobacter</taxon>
    </lineage>
</organism>
<reference key="1">
    <citation type="journal article" date="2005" name="PLoS Biol.">
        <title>Major structural differences and novel potential virulence mechanisms from the genomes of multiple Campylobacter species.</title>
        <authorList>
            <person name="Fouts D.E."/>
            <person name="Mongodin E.F."/>
            <person name="Mandrell R.E."/>
            <person name="Miller W.G."/>
            <person name="Rasko D.A."/>
            <person name="Ravel J."/>
            <person name="Brinkac L.M."/>
            <person name="DeBoy R.T."/>
            <person name="Parker C.T."/>
            <person name="Daugherty S.C."/>
            <person name="Dodson R.J."/>
            <person name="Durkin A.S."/>
            <person name="Madupu R."/>
            <person name="Sullivan S.A."/>
            <person name="Shetty J.U."/>
            <person name="Ayodeji M.A."/>
            <person name="Shvartsbeyn A."/>
            <person name="Schatz M.C."/>
            <person name="Badger J.H."/>
            <person name="Fraser C.M."/>
            <person name="Nelson K.E."/>
        </authorList>
    </citation>
    <scope>NUCLEOTIDE SEQUENCE [LARGE SCALE GENOMIC DNA]</scope>
    <source>
        <strain>RM1221</strain>
    </source>
</reference>
<accession>Q5HX30</accession>
<gene>
    <name evidence="2" type="primary">infB</name>
    <name type="ordered locus">CJE0131</name>
</gene>
<name>IF2_CAMJR</name>
<feature type="chain" id="PRO_0000137184" description="Translation initiation factor IF-2">
    <location>
        <begin position="1"/>
        <end position="871"/>
    </location>
</feature>
<feature type="domain" description="tr-type G">
    <location>
        <begin position="370"/>
        <end position="537"/>
    </location>
</feature>
<feature type="region of interest" description="Disordered" evidence="3">
    <location>
        <begin position="60"/>
        <end position="101"/>
    </location>
</feature>
<feature type="region of interest" description="Disordered" evidence="3">
    <location>
        <begin position="184"/>
        <end position="203"/>
    </location>
</feature>
<feature type="region of interest" description="G1" evidence="1">
    <location>
        <begin position="379"/>
        <end position="386"/>
    </location>
</feature>
<feature type="region of interest" description="G2" evidence="1">
    <location>
        <begin position="404"/>
        <end position="408"/>
    </location>
</feature>
<feature type="region of interest" description="G3" evidence="1">
    <location>
        <begin position="425"/>
        <end position="428"/>
    </location>
</feature>
<feature type="region of interest" description="G4" evidence="1">
    <location>
        <begin position="479"/>
        <end position="482"/>
    </location>
</feature>
<feature type="region of interest" description="G5" evidence="1">
    <location>
        <begin position="515"/>
        <end position="517"/>
    </location>
</feature>
<feature type="compositionally biased region" description="Basic residues" evidence="3">
    <location>
        <begin position="61"/>
        <end position="72"/>
    </location>
</feature>
<feature type="compositionally biased region" description="Basic and acidic residues" evidence="3">
    <location>
        <begin position="73"/>
        <end position="101"/>
    </location>
</feature>
<feature type="binding site" evidence="2">
    <location>
        <begin position="379"/>
        <end position="386"/>
    </location>
    <ligand>
        <name>GTP</name>
        <dbReference type="ChEBI" id="CHEBI:37565"/>
    </ligand>
</feature>
<feature type="binding site" evidence="2">
    <location>
        <begin position="425"/>
        <end position="429"/>
    </location>
    <ligand>
        <name>GTP</name>
        <dbReference type="ChEBI" id="CHEBI:37565"/>
    </ligand>
</feature>
<feature type="binding site" evidence="2">
    <location>
        <begin position="479"/>
        <end position="482"/>
    </location>
    <ligand>
        <name>GTP</name>
        <dbReference type="ChEBI" id="CHEBI:37565"/>
    </ligand>
</feature>
<sequence length="871" mass="96120">MAKIRIHEIAKELGYDSKEIIEKANELGLGIKTASNAVEPEIAAAIYEYIQTREIPEAFKKNIKTPTAKKPKKENIKEQEKLNESEKKEPKKEEKLKQEVKKEELKIEKENAKEEEKQEIIDAHKPQSLASATLAKRRGLVIVKKKKDEEEIQVKKEEVKNSNDISINNEERLSLKTMFSNADESLKKKKKEKKSFVASKKESTEKMNFLDEHDFGDISLDDEDEVVLPDFSVKEQEKPQNINKKQPNFIRQAVGNSAGFGLEGGIQRRSRKKPSKKIEKKEVEEVGSVAISKEIRVYEFADKIGKSTSEVISKLFMLGMMTTKNDFLDEDAIEILAAEFGIEINIINEADEFDYVKDYEEETDEKDLVTRAPVITIMGHVDHGKTSLLDYIRKSRVASGEAGGITQHVGAYMVEKNGRKITFIDTPGHEAFTAMRARGASITDIVIIVVAADDGVKPQTKEAINHAKAAGVPIIIAINKMDKEAANPDMVKTQLAEMEIMPVEWGGSYEFVGVSAKTGMGIEDLLEIVLLQADILELKANPKSFAKASIIESSVQKGRGAVATIIVQNGTLTIGSTVVAGEAYGKVRAMSDDQGKALKEIKPGECGVIVGLSEVADAGEILIAVKTDKEAREYANKRHEYNRQKELSKSTKVSIDELGAKIKEGNLKALPVILKADVQGSLEALKASLEKLRNDEIKVNIIHSGVGGITQSDIELASASENSIVLGFNIRPTGEVKERAKDKGVEIKTYNVIYNLLDDVKALLGGMMSPIISEEQLGQAEIRQVINVPKIGQIAGCMVTEGVINRGAKIRLIRDGVVVYEGNVSSLKRFKDDAKEVAKGYECGVGIEGCDDMRVGDYIESYKEVEEQASL</sequence>
<keyword id="KW-0963">Cytoplasm</keyword>
<keyword id="KW-0342">GTP-binding</keyword>
<keyword id="KW-0396">Initiation factor</keyword>
<keyword id="KW-0547">Nucleotide-binding</keyword>
<keyword id="KW-0648">Protein biosynthesis</keyword>
<comment type="function">
    <text evidence="2">One of the essential components for the initiation of protein synthesis. Protects formylmethionyl-tRNA from spontaneous hydrolysis and promotes its binding to the 30S ribosomal subunits. Also involved in the hydrolysis of GTP during the formation of the 70S ribosomal complex.</text>
</comment>
<comment type="subcellular location">
    <subcellularLocation>
        <location evidence="2">Cytoplasm</location>
    </subcellularLocation>
</comment>
<comment type="similarity">
    <text evidence="2">Belongs to the TRAFAC class translation factor GTPase superfamily. Classic translation factor GTPase family. IF-2 subfamily.</text>
</comment>
<evidence type="ECO:0000250" key="1"/>
<evidence type="ECO:0000255" key="2">
    <source>
        <dbReference type="HAMAP-Rule" id="MF_00100"/>
    </source>
</evidence>
<evidence type="ECO:0000256" key="3">
    <source>
        <dbReference type="SAM" id="MobiDB-lite"/>
    </source>
</evidence>
<dbReference type="EMBL" id="CP000025">
    <property type="protein sequence ID" value="AAW34726.1"/>
    <property type="molecule type" value="Genomic_DNA"/>
</dbReference>
<dbReference type="RefSeq" id="WP_002868393.1">
    <property type="nucleotide sequence ID" value="NC_003912.7"/>
</dbReference>
<dbReference type="SMR" id="Q5HX30"/>
<dbReference type="KEGG" id="cjr:CJE0131"/>
<dbReference type="HOGENOM" id="CLU_006301_4_1_7"/>
<dbReference type="GO" id="GO:0005829">
    <property type="term" value="C:cytosol"/>
    <property type="evidence" value="ECO:0007669"/>
    <property type="project" value="TreeGrafter"/>
</dbReference>
<dbReference type="GO" id="GO:0005525">
    <property type="term" value="F:GTP binding"/>
    <property type="evidence" value="ECO:0007669"/>
    <property type="project" value="UniProtKB-KW"/>
</dbReference>
<dbReference type="GO" id="GO:0003924">
    <property type="term" value="F:GTPase activity"/>
    <property type="evidence" value="ECO:0007669"/>
    <property type="project" value="UniProtKB-UniRule"/>
</dbReference>
<dbReference type="GO" id="GO:0003743">
    <property type="term" value="F:translation initiation factor activity"/>
    <property type="evidence" value="ECO:0007669"/>
    <property type="project" value="UniProtKB-UniRule"/>
</dbReference>
<dbReference type="CDD" id="cd01887">
    <property type="entry name" value="IF2_eIF5B"/>
    <property type="match status" value="1"/>
</dbReference>
<dbReference type="CDD" id="cd03702">
    <property type="entry name" value="IF2_mtIF2_II"/>
    <property type="match status" value="1"/>
</dbReference>
<dbReference type="CDD" id="cd03692">
    <property type="entry name" value="mtIF2_IVc"/>
    <property type="match status" value="1"/>
</dbReference>
<dbReference type="FunFam" id="2.40.30.10:FF:000008">
    <property type="entry name" value="Translation initiation factor IF-2"/>
    <property type="match status" value="1"/>
</dbReference>
<dbReference type="FunFam" id="2.40.30.10:FF:000054">
    <property type="entry name" value="Translation initiation factor IF-2"/>
    <property type="match status" value="1"/>
</dbReference>
<dbReference type="FunFam" id="3.40.50.10050:FF:000001">
    <property type="entry name" value="Translation initiation factor IF-2"/>
    <property type="match status" value="1"/>
</dbReference>
<dbReference type="FunFam" id="3.40.50.300:FF:000019">
    <property type="entry name" value="Translation initiation factor IF-2"/>
    <property type="match status" value="1"/>
</dbReference>
<dbReference type="Gene3D" id="1.10.10.2480">
    <property type="match status" value="1"/>
</dbReference>
<dbReference type="Gene3D" id="3.40.50.300">
    <property type="entry name" value="P-loop containing nucleotide triphosphate hydrolases"/>
    <property type="match status" value="1"/>
</dbReference>
<dbReference type="Gene3D" id="2.40.30.10">
    <property type="entry name" value="Translation factors"/>
    <property type="match status" value="2"/>
</dbReference>
<dbReference type="Gene3D" id="3.40.50.10050">
    <property type="entry name" value="Translation initiation factor IF- 2, domain 3"/>
    <property type="match status" value="1"/>
</dbReference>
<dbReference type="HAMAP" id="MF_00100_B">
    <property type="entry name" value="IF_2_B"/>
    <property type="match status" value="1"/>
</dbReference>
<dbReference type="InterPro" id="IPR053905">
    <property type="entry name" value="EF-G-like_DII"/>
</dbReference>
<dbReference type="InterPro" id="IPR004161">
    <property type="entry name" value="EFTu-like_2"/>
</dbReference>
<dbReference type="InterPro" id="IPR044145">
    <property type="entry name" value="IF2_II"/>
</dbReference>
<dbReference type="InterPro" id="IPR006847">
    <property type="entry name" value="IF2_N"/>
</dbReference>
<dbReference type="InterPro" id="IPR027417">
    <property type="entry name" value="P-loop_NTPase"/>
</dbReference>
<dbReference type="InterPro" id="IPR005225">
    <property type="entry name" value="Small_GTP-bd"/>
</dbReference>
<dbReference type="InterPro" id="IPR000795">
    <property type="entry name" value="T_Tr_GTP-bd_dom"/>
</dbReference>
<dbReference type="InterPro" id="IPR000178">
    <property type="entry name" value="TF_IF2_bacterial-like"/>
</dbReference>
<dbReference type="InterPro" id="IPR015760">
    <property type="entry name" value="TIF_IF2"/>
</dbReference>
<dbReference type="InterPro" id="IPR023115">
    <property type="entry name" value="TIF_IF2_dom3"/>
</dbReference>
<dbReference type="InterPro" id="IPR036925">
    <property type="entry name" value="TIF_IF2_dom3_sf"/>
</dbReference>
<dbReference type="InterPro" id="IPR009000">
    <property type="entry name" value="Transl_B-barrel_sf"/>
</dbReference>
<dbReference type="NCBIfam" id="TIGR00487">
    <property type="entry name" value="IF-2"/>
    <property type="match status" value="1"/>
</dbReference>
<dbReference type="NCBIfam" id="TIGR00231">
    <property type="entry name" value="small_GTP"/>
    <property type="match status" value="1"/>
</dbReference>
<dbReference type="PANTHER" id="PTHR43381:SF5">
    <property type="entry name" value="TR-TYPE G DOMAIN-CONTAINING PROTEIN"/>
    <property type="match status" value="1"/>
</dbReference>
<dbReference type="PANTHER" id="PTHR43381">
    <property type="entry name" value="TRANSLATION INITIATION FACTOR IF-2-RELATED"/>
    <property type="match status" value="1"/>
</dbReference>
<dbReference type="Pfam" id="PF22042">
    <property type="entry name" value="EF-G_D2"/>
    <property type="match status" value="1"/>
</dbReference>
<dbReference type="Pfam" id="PF00009">
    <property type="entry name" value="GTP_EFTU"/>
    <property type="match status" value="1"/>
</dbReference>
<dbReference type="Pfam" id="PF03144">
    <property type="entry name" value="GTP_EFTU_D2"/>
    <property type="match status" value="1"/>
</dbReference>
<dbReference type="Pfam" id="PF11987">
    <property type="entry name" value="IF-2"/>
    <property type="match status" value="1"/>
</dbReference>
<dbReference type="Pfam" id="PF04760">
    <property type="entry name" value="IF2_N"/>
    <property type="match status" value="2"/>
</dbReference>
<dbReference type="SUPFAM" id="SSF52156">
    <property type="entry name" value="Initiation factor IF2/eIF5b, domain 3"/>
    <property type="match status" value="1"/>
</dbReference>
<dbReference type="SUPFAM" id="SSF52540">
    <property type="entry name" value="P-loop containing nucleoside triphosphate hydrolases"/>
    <property type="match status" value="1"/>
</dbReference>
<dbReference type="SUPFAM" id="SSF50447">
    <property type="entry name" value="Translation proteins"/>
    <property type="match status" value="2"/>
</dbReference>
<dbReference type="PROSITE" id="PS51722">
    <property type="entry name" value="G_TR_2"/>
    <property type="match status" value="1"/>
</dbReference>
<dbReference type="PROSITE" id="PS01176">
    <property type="entry name" value="IF2"/>
    <property type="match status" value="1"/>
</dbReference>
<protein>
    <recommendedName>
        <fullName evidence="2">Translation initiation factor IF-2</fullName>
    </recommendedName>
</protein>
<proteinExistence type="inferred from homology"/>